<feature type="chain" id="PRO_0000359136" description="Acetyl-coenzyme A carboxylase carboxyl transferase subunit beta, chloroplastic">
    <location>
        <begin position="1"/>
        <end position="489"/>
    </location>
</feature>
<feature type="domain" description="CoA carboxyltransferase N-terminal" evidence="3">
    <location>
        <begin position="225"/>
        <end position="489"/>
    </location>
</feature>
<feature type="zinc finger region" description="C4-type" evidence="2">
    <location>
        <begin position="229"/>
        <end position="248"/>
    </location>
</feature>
<feature type="binding site" evidence="2">
    <location>
        <position position="229"/>
    </location>
    <ligand>
        <name>Zn(2+)</name>
        <dbReference type="ChEBI" id="CHEBI:29105"/>
    </ligand>
</feature>
<feature type="binding site" evidence="2">
    <location>
        <position position="232"/>
    </location>
    <ligand>
        <name>Zn(2+)</name>
        <dbReference type="ChEBI" id="CHEBI:29105"/>
    </ligand>
</feature>
<feature type="binding site" evidence="2">
    <location>
        <position position="245"/>
    </location>
    <ligand>
        <name>Zn(2+)</name>
        <dbReference type="ChEBI" id="CHEBI:29105"/>
    </ligand>
</feature>
<feature type="binding site" evidence="2">
    <location>
        <position position="248"/>
    </location>
    <ligand>
        <name>Zn(2+)</name>
        <dbReference type="ChEBI" id="CHEBI:29105"/>
    </ligand>
</feature>
<proteinExistence type="inferred from homology"/>
<sequence length="489" mass="55845">MEKSWFNFMFSKGELEYRSGLNKAMDSFAPIEKTTIKKDRFIYDMDKNFYGWGERSSYYNNVDLLVSSKDIRNFISDDTFFVRDSNKNSYSIYFDIKKNKFEINNDLSDLEFFFYSYCSSSYLNNRSKSDNDLHYDPYVKNTKSNCNNHINSCIDSYFRSHICIDSYFLSDSTNSNESYIYNFICSESGKIRESKNYKIRTKTNRNRNNLMNSKDFDITKNYNQLWIQCDNCYGLMYKKVEMNVCEECGHYLKMTSSERIELLIDPGTWNPMDEDMVSADPIKFHSREEPYKNRIDSAQKKTGLTDAVQTGTGQLNGIPVALGVMDFQFMGGSMGSVVGEKITRLIEYATNQCLPLILVCSSGGARMQEGSLSLMQMAKISSVLCDYQSSKKLFYISILTSPTTGGVTASFGMLGDIIIAEPYAYIAFAGKRVIEQTLKKAVPEGSQAAESLLRKGLLDAIVPRNPLKGVVSELFQLHAFFPLNKTEIK</sequence>
<evidence type="ECO:0000250" key="1"/>
<evidence type="ECO:0000255" key="2">
    <source>
        <dbReference type="HAMAP-Rule" id="MF_01395"/>
    </source>
</evidence>
<evidence type="ECO:0000255" key="3">
    <source>
        <dbReference type="PROSITE-ProRule" id="PRU01136"/>
    </source>
</evidence>
<gene>
    <name evidence="2" type="primary">accD</name>
</gene>
<name>ACCD_DRANE</name>
<comment type="function">
    <text evidence="2">Component of the acetyl coenzyme A carboxylase (ACC) complex. Biotin carboxylase (BC) catalyzes the carboxylation of biotin on its carrier protein (BCCP) and then the CO(2) group is transferred by the transcarboxylase to acetyl-CoA to form malonyl-CoA.</text>
</comment>
<comment type="catalytic activity">
    <reaction evidence="2">
        <text>N(6)-carboxybiotinyl-L-lysyl-[protein] + acetyl-CoA = N(6)-biotinyl-L-lysyl-[protein] + malonyl-CoA</text>
        <dbReference type="Rhea" id="RHEA:54728"/>
        <dbReference type="Rhea" id="RHEA-COMP:10505"/>
        <dbReference type="Rhea" id="RHEA-COMP:10506"/>
        <dbReference type="ChEBI" id="CHEBI:57288"/>
        <dbReference type="ChEBI" id="CHEBI:57384"/>
        <dbReference type="ChEBI" id="CHEBI:83144"/>
        <dbReference type="ChEBI" id="CHEBI:83145"/>
        <dbReference type="EC" id="2.1.3.15"/>
    </reaction>
</comment>
<comment type="cofactor">
    <cofactor evidence="2">
        <name>Zn(2+)</name>
        <dbReference type="ChEBI" id="CHEBI:29105"/>
    </cofactor>
    <text evidence="2">Binds 1 zinc ion per subunit.</text>
</comment>
<comment type="pathway">
    <text evidence="2">Lipid metabolism; malonyl-CoA biosynthesis; malonyl-CoA from acetyl-CoA: step 1/1.</text>
</comment>
<comment type="subunit">
    <text evidence="1">Acetyl-CoA carboxylase is a heterohexamer composed of biotin carboxyl carrier protein, biotin carboxylase and 2 subunits each of ACCase subunit alpha and ACCase plastid-coded subunit beta (accD).</text>
</comment>
<comment type="subcellular location">
    <subcellularLocation>
        <location evidence="2">Plastid</location>
        <location evidence="2">Chloroplast stroma</location>
    </subcellularLocation>
</comment>
<comment type="similarity">
    <text evidence="2">Belongs to the AccD/PCCB family.</text>
</comment>
<accession>A4QL28</accession>
<keyword id="KW-0067">ATP-binding</keyword>
<keyword id="KW-0150">Chloroplast</keyword>
<keyword id="KW-0275">Fatty acid biosynthesis</keyword>
<keyword id="KW-0276">Fatty acid metabolism</keyword>
<keyword id="KW-0444">Lipid biosynthesis</keyword>
<keyword id="KW-0443">Lipid metabolism</keyword>
<keyword id="KW-0479">Metal-binding</keyword>
<keyword id="KW-0547">Nucleotide-binding</keyword>
<keyword id="KW-0934">Plastid</keyword>
<keyword id="KW-0808">Transferase</keyword>
<keyword id="KW-0862">Zinc</keyword>
<keyword id="KW-0863">Zinc-finger</keyword>
<organism>
    <name type="scientific">Draba nemorosa</name>
    <name type="common">Woodland whitlowgrass</name>
    <dbReference type="NCBI Taxonomy" id="171822"/>
    <lineage>
        <taxon>Eukaryota</taxon>
        <taxon>Viridiplantae</taxon>
        <taxon>Streptophyta</taxon>
        <taxon>Embryophyta</taxon>
        <taxon>Tracheophyta</taxon>
        <taxon>Spermatophyta</taxon>
        <taxon>Magnoliopsida</taxon>
        <taxon>eudicotyledons</taxon>
        <taxon>Gunneridae</taxon>
        <taxon>Pentapetalae</taxon>
        <taxon>rosids</taxon>
        <taxon>malvids</taxon>
        <taxon>Brassicales</taxon>
        <taxon>Brassicaceae</taxon>
        <taxon>Arabideae</taxon>
        <taxon>Draba</taxon>
    </lineage>
</organism>
<reference key="1">
    <citation type="submission" date="2007-03" db="EMBL/GenBank/DDBJ databases">
        <title>Sequencing analysis of Draba nemoroza chloroplast DNA.</title>
        <authorList>
            <person name="Hosouchi T."/>
            <person name="Tsuruoka H."/>
            <person name="Kotani H."/>
        </authorList>
    </citation>
    <scope>NUCLEOTIDE SEQUENCE [LARGE SCALE GENOMIC DNA]</scope>
</reference>
<protein>
    <recommendedName>
        <fullName evidence="2">Acetyl-coenzyme A carboxylase carboxyl transferase subunit beta, chloroplastic</fullName>
        <shortName evidence="2">ACCase subunit beta</shortName>
        <shortName evidence="2">Acetyl-CoA carboxylase carboxyltransferase subunit beta</shortName>
        <ecNumber evidence="2">2.1.3.15</ecNumber>
    </recommendedName>
</protein>
<dbReference type="EC" id="2.1.3.15" evidence="2"/>
<dbReference type="EMBL" id="AP009373">
    <property type="protein sequence ID" value="BAF50383.1"/>
    <property type="molecule type" value="Genomic_DNA"/>
</dbReference>
<dbReference type="RefSeq" id="YP_001123559.1">
    <property type="nucleotide sequence ID" value="NC_009272.1"/>
</dbReference>
<dbReference type="SMR" id="A4QL28"/>
<dbReference type="GeneID" id="4964714"/>
<dbReference type="UniPathway" id="UPA00655">
    <property type="reaction ID" value="UER00711"/>
</dbReference>
<dbReference type="GO" id="GO:0009317">
    <property type="term" value="C:acetyl-CoA carboxylase complex"/>
    <property type="evidence" value="ECO:0007669"/>
    <property type="project" value="InterPro"/>
</dbReference>
<dbReference type="GO" id="GO:0009570">
    <property type="term" value="C:chloroplast stroma"/>
    <property type="evidence" value="ECO:0007669"/>
    <property type="project" value="UniProtKB-SubCell"/>
</dbReference>
<dbReference type="GO" id="GO:0003989">
    <property type="term" value="F:acetyl-CoA carboxylase activity"/>
    <property type="evidence" value="ECO:0007669"/>
    <property type="project" value="InterPro"/>
</dbReference>
<dbReference type="GO" id="GO:0005524">
    <property type="term" value="F:ATP binding"/>
    <property type="evidence" value="ECO:0007669"/>
    <property type="project" value="UniProtKB-KW"/>
</dbReference>
<dbReference type="GO" id="GO:0016743">
    <property type="term" value="F:carboxyl- or carbamoyltransferase activity"/>
    <property type="evidence" value="ECO:0007669"/>
    <property type="project" value="UniProtKB-UniRule"/>
</dbReference>
<dbReference type="GO" id="GO:0008270">
    <property type="term" value="F:zinc ion binding"/>
    <property type="evidence" value="ECO:0007669"/>
    <property type="project" value="UniProtKB-UniRule"/>
</dbReference>
<dbReference type="GO" id="GO:0006633">
    <property type="term" value="P:fatty acid biosynthetic process"/>
    <property type="evidence" value="ECO:0007669"/>
    <property type="project" value="UniProtKB-KW"/>
</dbReference>
<dbReference type="GO" id="GO:2001295">
    <property type="term" value="P:malonyl-CoA biosynthetic process"/>
    <property type="evidence" value="ECO:0007669"/>
    <property type="project" value="UniProtKB-UniRule"/>
</dbReference>
<dbReference type="Gene3D" id="3.90.226.10">
    <property type="entry name" value="2-enoyl-CoA Hydratase, Chain A, domain 1"/>
    <property type="match status" value="1"/>
</dbReference>
<dbReference type="HAMAP" id="MF_01395">
    <property type="entry name" value="AcetylCoA_CT_beta"/>
    <property type="match status" value="1"/>
</dbReference>
<dbReference type="InterPro" id="IPR034733">
    <property type="entry name" value="AcCoA_carboxyl_beta"/>
</dbReference>
<dbReference type="InterPro" id="IPR000438">
    <property type="entry name" value="Acetyl_CoA_COase_Trfase_b_su"/>
</dbReference>
<dbReference type="InterPro" id="IPR029045">
    <property type="entry name" value="ClpP/crotonase-like_dom_sf"/>
</dbReference>
<dbReference type="InterPro" id="IPR011762">
    <property type="entry name" value="COA_CT_N"/>
</dbReference>
<dbReference type="NCBIfam" id="TIGR00515">
    <property type="entry name" value="accD"/>
    <property type="match status" value="1"/>
</dbReference>
<dbReference type="PANTHER" id="PTHR42995">
    <property type="entry name" value="ACETYL-COENZYME A CARBOXYLASE CARBOXYL TRANSFERASE SUBUNIT BETA, CHLOROPLASTIC"/>
    <property type="match status" value="1"/>
</dbReference>
<dbReference type="PANTHER" id="PTHR42995:SF5">
    <property type="entry name" value="ACETYL-COENZYME A CARBOXYLASE CARBOXYL TRANSFERASE SUBUNIT BETA, CHLOROPLASTIC"/>
    <property type="match status" value="1"/>
</dbReference>
<dbReference type="Pfam" id="PF01039">
    <property type="entry name" value="Carboxyl_trans"/>
    <property type="match status" value="1"/>
</dbReference>
<dbReference type="PRINTS" id="PR01070">
    <property type="entry name" value="ACCCTRFRASEB"/>
</dbReference>
<dbReference type="SUPFAM" id="SSF52096">
    <property type="entry name" value="ClpP/crotonase"/>
    <property type="match status" value="1"/>
</dbReference>
<dbReference type="PROSITE" id="PS50980">
    <property type="entry name" value="COA_CT_NTER"/>
    <property type="match status" value="1"/>
</dbReference>
<geneLocation type="chloroplast"/>